<dbReference type="EC" id="1.6.5.2" evidence="1"/>
<dbReference type="EMBL" id="AE006469">
    <property type="protein sequence ID" value="AAK65719.1"/>
    <property type="molecule type" value="Genomic_DNA"/>
</dbReference>
<dbReference type="PIR" id="E95394">
    <property type="entry name" value="E95394"/>
</dbReference>
<dbReference type="RefSeq" id="NP_436307.1">
    <property type="nucleotide sequence ID" value="NC_003037.1"/>
</dbReference>
<dbReference type="SMR" id="Q92Y27"/>
<dbReference type="EnsemblBacteria" id="AAK65719">
    <property type="protein sequence ID" value="AAK65719"/>
    <property type="gene ID" value="SMa1935"/>
</dbReference>
<dbReference type="KEGG" id="sme:SMa1935"/>
<dbReference type="PATRIC" id="fig|266834.11.peg.1099"/>
<dbReference type="HOGENOM" id="CLU_051402_0_2_5"/>
<dbReference type="OrthoDB" id="9801479at2"/>
<dbReference type="Proteomes" id="UP000001976">
    <property type="component" value="Plasmid pSymA"/>
</dbReference>
<dbReference type="GO" id="GO:0016020">
    <property type="term" value="C:membrane"/>
    <property type="evidence" value="ECO:0007669"/>
    <property type="project" value="TreeGrafter"/>
</dbReference>
<dbReference type="GO" id="GO:0050660">
    <property type="term" value="F:flavin adenine dinucleotide binding"/>
    <property type="evidence" value="ECO:0007669"/>
    <property type="project" value="UniProtKB-UniRule"/>
</dbReference>
<dbReference type="GO" id="GO:0010181">
    <property type="term" value="F:FMN binding"/>
    <property type="evidence" value="ECO:0007669"/>
    <property type="project" value="InterPro"/>
</dbReference>
<dbReference type="GO" id="GO:0051287">
    <property type="term" value="F:NAD binding"/>
    <property type="evidence" value="ECO:0007669"/>
    <property type="project" value="UniProtKB-UniRule"/>
</dbReference>
<dbReference type="GO" id="GO:0050136">
    <property type="term" value="F:NADH:ubiquinone reductase (non-electrogenic) activity"/>
    <property type="evidence" value="ECO:0007669"/>
    <property type="project" value="RHEA"/>
</dbReference>
<dbReference type="GO" id="GO:0050661">
    <property type="term" value="F:NADP binding"/>
    <property type="evidence" value="ECO:0007669"/>
    <property type="project" value="UniProtKB-UniRule"/>
</dbReference>
<dbReference type="GO" id="GO:0008753">
    <property type="term" value="F:NADPH dehydrogenase (quinone) activity"/>
    <property type="evidence" value="ECO:0007669"/>
    <property type="project" value="RHEA"/>
</dbReference>
<dbReference type="FunFam" id="3.40.50.360:FF:000001">
    <property type="entry name" value="NAD(P)H dehydrogenase (Quinone) FQR1-like"/>
    <property type="match status" value="1"/>
</dbReference>
<dbReference type="Gene3D" id="3.40.50.360">
    <property type="match status" value="1"/>
</dbReference>
<dbReference type="HAMAP" id="MF_01017">
    <property type="entry name" value="NQOR"/>
    <property type="match status" value="1"/>
</dbReference>
<dbReference type="InterPro" id="IPR008254">
    <property type="entry name" value="Flavodoxin/NO_synth"/>
</dbReference>
<dbReference type="InterPro" id="IPR029039">
    <property type="entry name" value="Flavoprotein-like_sf"/>
</dbReference>
<dbReference type="InterPro" id="IPR010089">
    <property type="entry name" value="Flavoprotein_WrbA-like"/>
</dbReference>
<dbReference type="InterPro" id="IPR005025">
    <property type="entry name" value="FMN_Rdtase-like_dom"/>
</dbReference>
<dbReference type="InterPro" id="IPR037513">
    <property type="entry name" value="NQO"/>
</dbReference>
<dbReference type="NCBIfam" id="TIGR01755">
    <property type="entry name" value="flav_wrbA"/>
    <property type="match status" value="1"/>
</dbReference>
<dbReference type="NCBIfam" id="NF002999">
    <property type="entry name" value="PRK03767.1"/>
    <property type="match status" value="1"/>
</dbReference>
<dbReference type="PANTHER" id="PTHR30546">
    <property type="entry name" value="FLAVODOXIN-RELATED PROTEIN WRBA-RELATED"/>
    <property type="match status" value="1"/>
</dbReference>
<dbReference type="PANTHER" id="PTHR30546:SF23">
    <property type="entry name" value="FLAVOPROTEIN-LIKE PROTEIN YCP4-RELATED"/>
    <property type="match status" value="1"/>
</dbReference>
<dbReference type="Pfam" id="PF03358">
    <property type="entry name" value="FMN_red"/>
    <property type="match status" value="1"/>
</dbReference>
<dbReference type="SUPFAM" id="SSF52218">
    <property type="entry name" value="Flavoproteins"/>
    <property type="match status" value="1"/>
</dbReference>
<dbReference type="PROSITE" id="PS50902">
    <property type="entry name" value="FLAVODOXIN_LIKE"/>
    <property type="match status" value="1"/>
</dbReference>
<gene>
    <name type="ordered locus">RA1061</name>
    <name type="ORF">SMa1935</name>
</gene>
<feature type="chain" id="PRO_0000200753" description="NAD(P)H dehydrogenase (quinone) 3">
    <location>
        <begin position="1"/>
        <end position="212"/>
    </location>
</feature>
<feature type="domain" description="Flavodoxin-like" evidence="1">
    <location>
        <begin position="4"/>
        <end position="192"/>
    </location>
</feature>
<feature type="region of interest" description="Disordered" evidence="2">
    <location>
        <begin position="161"/>
        <end position="182"/>
    </location>
</feature>
<feature type="binding site" evidence="1">
    <location>
        <begin position="10"/>
        <end position="15"/>
    </location>
    <ligand>
        <name>FMN</name>
        <dbReference type="ChEBI" id="CHEBI:58210"/>
    </ligand>
</feature>
<feature type="binding site" evidence="1">
    <location>
        <position position="12"/>
    </location>
    <ligand>
        <name>NAD(+)</name>
        <dbReference type="ChEBI" id="CHEBI:57540"/>
    </ligand>
</feature>
<feature type="binding site" evidence="1">
    <location>
        <begin position="78"/>
        <end position="80"/>
    </location>
    <ligand>
        <name>FMN</name>
        <dbReference type="ChEBI" id="CHEBI:58210"/>
    </ligand>
</feature>
<feature type="binding site" evidence="1">
    <location>
        <position position="98"/>
    </location>
    <ligand>
        <name>substrate</name>
    </ligand>
</feature>
<feature type="binding site" evidence="1">
    <location>
        <begin position="113"/>
        <end position="119"/>
    </location>
    <ligand>
        <name>FMN</name>
        <dbReference type="ChEBI" id="CHEBI:58210"/>
    </ligand>
</feature>
<feature type="binding site" evidence="1">
    <location>
        <position position="134"/>
    </location>
    <ligand>
        <name>FMN</name>
        <dbReference type="ChEBI" id="CHEBI:58210"/>
    </ligand>
</feature>
<evidence type="ECO:0000255" key="1">
    <source>
        <dbReference type="HAMAP-Rule" id="MF_01017"/>
    </source>
</evidence>
<evidence type="ECO:0000256" key="2">
    <source>
        <dbReference type="SAM" id="MobiDB-lite"/>
    </source>
</evidence>
<protein>
    <recommendedName>
        <fullName evidence="1">NAD(P)H dehydrogenase (quinone) 3</fullName>
        <ecNumber evidence="1">1.6.5.2</ecNumber>
    </recommendedName>
    <alternativeName>
        <fullName>Flavoprotein WrbA 3</fullName>
    </alternativeName>
    <alternativeName>
        <fullName evidence="1">NAD(P)H:quinone oxidoreductase 3</fullName>
        <shortName evidence="1">NQO 3</shortName>
    </alternativeName>
</protein>
<name>NQOR3_RHIME</name>
<accession>Q92Y27</accession>
<organism>
    <name type="scientific">Rhizobium meliloti (strain 1021)</name>
    <name type="common">Ensifer meliloti</name>
    <name type="synonym">Sinorhizobium meliloti</name>
    <dbReference type="NCBI Taxonomy" id="266834"/>
    <lineage>
        <taxon>Bacteria</taxon>
        <taxon>Pseudomonadati</taxon>
        <taxon>Pseudomonadota</taxon>
        <taxon>Alphaproteobacteria</taxon>
        <taxon>Hyphomicrobiales</taxon>
        <taxon>Rhizobiaceae</taxon>
        <taxon>Sinorhizobium/Ensifer group</taxon>
        <taxon>Sinorhizobium</taxon>
    </lineage>
</organism>
<geneLocation type="plasmid">
    <name>pSymA</name>
    <name>megaplasmid 1</name>
</geneLocation>
<reference key="1">
    <citation type="journal article" date="2001" name="Proc. Natl. Acad. Sci. U.S.A.">
        <title>Nucleotide sequence and predicted functions of the entire Sinorhizobium meliloti pSymA megaplasmid.</title>
        <authorList>
            <person name="Barnett M.J."/>
            <person name="Fisher R.F."/>
            <person name="Jones T."/>
            <person name="Komp C."/>
            <person name="Abola A.P."/>
            <person name="Barloy-Hubler F."/>
            <person name="Bowser L."/>
            <person name="Capela D."/>
            <person name="Galibert F."/>
            <person name="Gouzy J."/>
            <person name="Gurjal M."/>
            <person name="Hong A."/>
            <person name="Huizar L."/>
            <person name="Hyman R.W."/>
            <person name="Kahn D."/>
            <person name="Kahn M.L."/>
            <person name="Kalman S."/>
            <person name="Keating D.H."/>
            <person name="Palm C."/>
            <person name="Peck M.C."/>
            <person name="Surzycki R."/>
            <person name="Wells D.H."/>
            <person name="Yeh K.-C."/>
            <person name="Davis R.W."/>
            <person name="Federspiel N.A."/>
            <person name="Long S.R."/>
        </authorList>
    </citation>
    <scope>NUCLEOTIDE SEQUENCE [LARGE SCALE GENOMIC DNA]</scope>
    <source>
        <strain>1021</strain>
    </source>
</reference>
<reference key="2">
    <citation type="journal article" date="2001" name="Science">
        <title>The composite genome of the legume symbiont Sinorhizobium meliloti.</title>
        <authorList>
            <person name="Galibert F."/>
            <person name="Finan T.M."/>
            <person name="Long S.R."/>
            <person name="Puehler A."/>
            <person name="Abola P."/>
            <person name="Ampe F."/>
            <person name="Barloy-Hubler F."/>
            <person name="Barnett M.J."/>
            <person name="Becker A."/>
            <person name="Boistard P."/>
            <person name="Bothe G."/>
            <person name="Boutry M."/>
            <person name="Bowser L."/>
            <person name="Buhrmester J."/>
            <person name="Cadieu E."/>
            <person name="Capela D."/>
            <person name="Chain P."/>
            <person name="Cowie A."/>
            <person name="Davis R.W."/>
            <person name="Dreano S."/>
            <person name="Federspiel N.A."/>
            <person name="Fisher R.F."/>
            <person name="Gloux S."/>
            <person name="Godrie T."/>
            <person name="Goffeau A."/>
            <person name="Golding B."/>
            <person name="Gouzy J."/>
            <person name="Gurjal M."/>
            <person name="Hernandez-Lucas I."/>
            <person name="Hong A."/>
            <person name="Huizar L."/>
            <person name="Hyman R.W."/>
            <person name="Jones T."/>
            <person name="Kahn D."/>
            <person name="Kahn M.L."/>
            <person name="Kalman S."/>
            <person name="Keating D.H."/>
            <person name="Kiss E."/>
            <person name="Komp C."/>
            <person name="Lelaure V."/>
            <person name="Masuy D."/>
            <person name="Palm C."/>
            <person name="Peck M.C."/>
            <person name="Pohl T.M."/>
            <person name="Portetelle D."/>
            <person name="Purnelle B."/>
            <person name="Ramsperger U."/>
            <person name="Surzycki R."/>
            <person name="Thebault P."/>
            <person name="Vandenbol M."/>
            <person name="Vorhoelter F.J."/>
            <person name="Weidner S."/>
            <person name="Wells D.H."/>
            <person name="Wong K."/>
            <person name="Yeh K.-C."/>
            <person name="Batut J."/>
        </authorList>
    </citation>
    <scope>NUCLEOTIDE SEQUENCE [LARGE SCALE GENOMIC DNA]</scope>
    <source>
        <strain>1021</strain>
    </source>
</reference>
<proteinExistence type="inferred from homology"/>
<keyword id="KW-0285">Flavoprotein</keyword>
<keyword id="KW-0288">FMN</keyword>
<keyword id="KW-0520">NAD</keyword>
<keyword id="KW-0521">NADP</keyword>
<keyword id="KW-0547">Nucleotide-binding</keyword>
<keyword id="KW-0560">Oxidoreductase</keyword>
<keyword id="KW-0614">Plasmid</keyword>
<keyword id="KW-1185">Reference proteome</keyword>
<comment type="catalytic activity">
    <reaction evidence="1">
        <text>a quinone + NADH + H(+) = a quinol + NAD(+)</text>
        <dbReference type="Rhea" id="RHEA:46160"/>
        <dbReference type="ChEBI" id="CHEBI:15378"/>
        <dbReference type="ChEBI" id="CHEBI:24646"/>
        <dbReference type="ChEBI" id="CHEBI:57540"/>
        <dbReference type="ChEBI" id="CHEBI:57945"/>
        <dbReference type="ChEBI" id="CHEBI:132124"/>
        <dbReference type="EC" id="1.6.5.2"/>
    </reaction>
</comment>
<comment type="catalytic activity">
    <reaction evidence="1">
        <text>a quinone + NADPH + H(+) = a quinol + NADP(+)</text>
        <dbReference type="Rhea" id="RHEA:46164"/>
        <dbReference type="ChEBI" id="CHEBI:15378"/>
        <dbReference type="ChEBI" id="CHEBI:24646"/>
        <dbReference type="ChEBI" id="CHEBI:57783"/>
        <dbReference type="ChEBI" id="CHEBI:58349"/>
        <dbReference type="ChEBI" id="CHEBI:132124"/>
        <dbReference type="EC" id="1.6.5.2"/>
    </reaction>
</comment>
<comment type="cofactor">
    <cofactor evidence="1">
        <name>FMN</name>
        <dbReference type="ChEBI" id="CHEBI:58210"/>
    </cofactor>
    <text evidence="1">Binds 1 FMN per monomer.</text>
</comment>
<comment type="similarity">
    <text evidence="1">Belongs to the WrbA family.</text>
</comment>
<sequence length="212" mass="22634">MTKMLVLYYSSYGHIEAMAKAVANGAKQAGATVALKRVPELVPEAVARSSGYRLGQEAPIATVAELADYDAIVIGTPTRFGNMASQMKNFLDQTGGLWAENKLVGKVGSVFTSTGSQHGGQESTILSTHVVMLHLGMVIVGLPYSFKGQMRMDEITGGSPYGASTLAEDENHRDRSPSANELDGARFQGRHVAEVAAAMQLGRSHLQPELVR</sequence>